<organism>
    <name type="scientific">Oryctolagus cuniculus</name>
    <name type="common">Rabbit</name>
    <dbReference type="NCBI Taxonomy" id="9986"/>
    <lineage>
        <taxon>Eukaryota</taxon>
        <taxon>Metazoa</taxon>
        <taxon>Chordata</taxon>
        <taxon>Craniata</taxon>
        <taxon>Vertebrata</taxon>
        <taxon>Euteleostomi</taxon>
        <taxon>Mammalia</taxon>
        <taxon>Eutheria</taxon>
        <taxon>Euarchontoglires</taxon>
        <taxon>Glires</taxon>
        <taxon>Lagomorpha</taxon>
        <taxon>Leporidae</taxon>
        <taxon>Oryctolagus</taxon>
    </lineage>
</organism>
<name>NU4LM_RABIT</name>
<evidence type="ECO:0000250" key="1">
    <source>
        <dbReference type="UniProtKB" id="P03901"/>
    </source>
</evidence>
<evidence type="ECO:0000250" key="2">
    <source>
        <dbReference type="UniProtKB" id="P03902"/>
    </source>
</evidence>
<evidence type="ECO:0000255" key="3"/>
<evidence type="ECO:0000305" key="4"/>
<evidence type="ECO:0000312" key="5">
    <source>
        <dbReference type="Proteomes" id="UP000001811"/>
    </source>
</evidence>
<sequence length="98" mass="10885">MPSIYINIFLAFILALLGMLVYRSHLMSSLLCLEGMMLSLFVLITLTALNTHFTLSFMFPIILLVFAACEAAVGLALLVMVSNTYGMDYVQNLNLLQC</sequence>
<keyword id="KW-0249">Electron transport</keyword>
<keyword id="KW-0472">Membrane</keyword>
<keyword id="KW-0496">Mitochondrion</keyword>
<keyword id="KW-0999">Mitochondrion inner membrane</keyword>
<keyword id="KW-0520">NAD</keyword>
<keyword id="KW-1185">Reference proteome</keyword>
<keyword id="KW-0679">Respiratory chain</keyword>
<keyword id="KW-1278">Translocase</keyword>
<keyword id="KW-0812">Transmembrane</keyword>
<keyword id="KW-1133">Transmembrane helix</keyword>
<keyword id="KW-0813">Transport</keyword>
<keyword id="KW-0830">Ubiquinone</keyword>
<gene>
    <name type="primary">MT-ND4L</name>
    <name type="synonym">MTND4L</name>
    <name type="synonym">NADH4L</name>
    <name type="synonym">ND4L</name>
</gene>
<comment type="function">
    <text evidence="1">Core subunit of the mitochondrial membrane respiratory chain NADH dehydrogenase (Complex I) which catalyzes electron transfer from NADH through the respiratory chain, using ubiquinone as an electron acceptor. Part of the enzyme membrane arm which is embedded in the lipid bilayer and involved in proton translocation.</text>
</comment>
<comment type="catalytic activity">
    <reaction evidence="1">
        <text>a ubiquinone + NADH + 5 H(+)(in) = a ubiquinol + NAD(+) + 4 H(+)(out)</text>
        <dbReference type="Rhea" id="RHEA:29091"/>
        <dbReference type="Rhea" id="RHEA-COMP:9565"/>
        <dbReference type="Rhea" id="RHEA-COMP:9566"/>
        <dbReference type="ChEBI" id="CHEBI:15378"/>
        <dbReference type="ChEBI" id="CHEBI:16389"/>
        <dbReference type="ChEBI" id="CHEBI:17976"/>
        <dbReference type="ChEBI" id="CHEBI:57540"/>
        <dbReference type="ChEBI" id="CHEBI:57945"/>
        <dbReference type="EC" id="7.1.1.2"/>
    </reaction>
    <physiologicalReaction direction="left-to-right" evidence="1">
        <dbReference type="Rhea" id="RHEA:29092"/>
    </physiologicalReaction>
</comment>
<comment type="subunit">
    <text evidence="2">Core subunit of respiratory chain NADH dehydrogenase (Complex I) which is composed of 45 different subunits.</text>
</comment>
<comment type="subcellular location">
    <subcellularLocation>
        <location evidence="2">Mitochondrion inner membrane</location>
        <topology evidence="3">Multi-pass membrane protein</topology>
    </subcellularLocation>
</comment>
<comment type="similarity">
    <text evidence="4">Belongs to the complex I subunit 4L family.</text>
</comment>
<accession>O79435</accession>
<proteinExistence type="inferred from homology"/>
<geneLocation type="mitochondrion"/>
<feature type="chain" id="PRO_0000118482" description="NADH-ubiquinone oxidoreductase chain 4L">
    <location>
        <begin position="1"/>
        <end position="98"/>
    </location>
</feature>
<feature type="transmembrane region" description="Helical" evidence="3">
    <location>
        <begin position="1"/>
        <end position="21"/>
    </location>
</feature>
<feature type="transmembrane region" description="Helical" evidence="3">
    <location>
        <begin position="29"/>
        <end position="49"/>
    </location>
</feature>
<feature type="transmembrane region" description="Helical" evidence="3">
    <location>
        <begin position="61"/>
        <end position="81"/>
    </location>
</feature>
<dbReference type="EC" id="7.1.1.2"/>
<dbReference type="EMBL" id="AJ001588">
    <property type="protein sequence ID" value="CAA04855.1"/>
    <property type="molecule type" value="Genomic_DNA"/>
</dbReference>
<dbReference type="PIR" id="T11488">
    <property type="entry name" value="T11488"/>
</dbReference>
<dbReference type="RefSeq" id="NP_007557.1">
    <property type="nucleotide sequence ID" value="NC_001913.1"/>
</dbReference>
<dbReference type="SMR" id="O79435"/>
<dbReference type="FunCoup" id="O79435">
    <property type="interactions" value="50"/>
</dbReference>
<dbReference type="STRING" id="9986.ENSOCUP00000026187"/>
<dbReference type="PaxDb" id="9986-ENSOCUP00000026187"/>
<dbReference type="Ensembl" id="ENSOCUT00000033132.1">
    <property type="protein sequence ID" value="ENSOCUP00000026187.1"/>
    <property type="gene ID" value="ENSOCUG00000029107.1"/>
</dbReference>
<dbReference type="GeneID" id="808222"/>
<dbReference type="KEGG" id="ocu:808222"/>
<dbReference type="CTD" id="4539"/>
<dbReference type="eggNOG" id="KOG4669">
    <property type="taxonomic scope" value="Eukaryota"/>
</dbReference>
<dbReference type="GeneTree" id="ENSGT00390000004755"/>
<dbReference type="HOGENOM" id="CLU_182394_0_0_1"/>
<dbReference type="InParanoid" id="O79435"/>
<dbReference type="OMA" id="MYRSHLM"/>
<dbReference type="OrthoDB" id="6146597at2759"/>
<dbReference type="TreeFam" id="TF338190"/>
<dbReference type="Proteomes" id="UP000001811">
    <property type="component" value="Mitochondrion"/>
</dbReference>
<dbReference type="Bgee" id="ENSOCUG00000029107">
    <property type="expression patterns" value="Expressed in prefrontal cortex and 14 other cell types or tissues"/>
</dbReference>
<dbReference type="ExpressionAtlas" id="O79435">
    <property type="expression patterns" value="baseline"/>
</dbReference>
<dbReference type="GO" id="GO:0005743">
    <property type="term" value="C:mitochondrial inner membrane"/>
    <property type="evidence" value="ECO:0000250"/>
    <property type="project" value="UniProtKB"/>
</dbReference>
<dbReference type="GO" id="GO:0045271">
    <property type="term" value="C:respiratory chain complex I"/>
    <property type="evidence" value="ECO:0000250"/>
    <property type="project" value="UniProtKB"/>
</dbReference>
<dbReference type="GO" id="GO:0008137">
    <property type="term" value="F:NADH dehydrogenase (ubiquinone) activity"/>
    <property type="evidence" value="ECO:0000250"/>
    <property type="project" value="UniProtKB"/>
</dbReference>
<dbReference type="GO" id="GO:0042773">
    <property type="term" value="P:ATP synthesis coupled electron transport"/>
    <property type="evidence" value="ECO:0007669"/>
    <property type="project" value="InterPro"/>
</dbReference>
<dbReference type="FunFam" id="1.10.287.3510:FF:000002">
    <property type="entry name" value="NADH-ubiquinone oxidoreductase chain 4L"/>
    <property type="match status" value="1"/>
</dbReference>
<dbReference type="Gene3D" id="1.10.287.3510">
    <property type="match status" value="1"/>
</dbReference>
<dbReference type="InterPro" id="IPR001133">
    <property type="entry name" value="NADH_UbQ_OxRdtase_chain4L/K"/>
</dbReference>
<dbReference type="InterPro" id="IPR039428">
    <property type="entry name" value="NUOK/Mnh_C1-like"/>
</dbReference>
<dbReference type="PANTHER" id="PTHR11434:SF0">
    <property type="entry name" value="NADH-UBIQUINONE OXIDOREDUCTASE CHAIN 4L"/>
    <property type="match status" value="1"/>
</dbReference>
<dbReference type="PANTHER" id="PTHR11434">
    <property type="entry name" value="NADH-UBIQUINONE OXIDOREDUCTASE SUBUNIT ND4L"/>
    <property type="match status" value="1"/>
</dbReference>
<dbReference type="Pfam" id="PF00420">
    <property type="entry name" value="Oxidored_q2"/>
    <property type="match status" value="1"/>
</dbReference>
<reference key="1">
    <citation type="journal article" date="1998" name="Genomics">
        <title>The complete mitochondrial DNA sequence of the rabbit, Oryctolagus cuniculus.</title>
        <authorList>
            <person name="Gissi C."/>
            <person name="Gullberg A."/>
            <person name="Arnason U."/>
        </authorList>
    </citation>
    <scope>NUCLEOTIDE SEQUENCE [LARGE SCALE GENOMIC DNA]</scope>
    <source>
        <strain evidence="5">Thorbecke</strain>
    </source>
</reference>
<protein>
    <recommendedName>
        <fullName>NADH-ubiquinone oxidoreductase chain 4L</fullName>
        <ecNumber>7.1.1.2</ecNumber>
    </recommendedName>
    <alternativeName>
        <fullName>NADH dehydrogenase subunit 4L</fullName>
    </alternativeName>
</protein>